<keyword id="KW-0217">Developmental protein</keyword>
<keyword id="KW-1015">Disulfide bond</keyword>
<keyword id="KW-0272">Extracellular matrix</keyword>
<keyword id="KW-0325">Glycoprotein</keyword>
<keyword id="KW-0449">Lipoprotein</keyword>
<keyword id="KW-1185">Reference proteome</keyword>
<keyword id="KW-0964">Secreted</keyword>
<keyword id="KW-0732">Signal</keyword>
<keyword id="KW-0879">Wnt signaling pathway</keyword>
<proteinExistence type="evidence at transcript level"/>
<sequence length="359" mass="40289">MNPCQIFASLVMSICCHILSSTAWSVNNFLMTGPKAYLAYTSSVQAGAQSGIEECKHQFAWDRWNCPESALQLSTHKGLRSATRETAFVHAISAAGVMYTLTKNCSMGDFENCGCDDSKIGKMGGRGWVWGGCSDNVNFGDRIAKLFVDALENGHDSRAAVNLHNNEAGRLAVKATLKRTCKCHGLSGSCSIQTCWMQLADFRDIGSYLKIKHDQARKLEMDKIRMRAGNSADNRGAIADTFSAVARTELIFMEDSPDYCVKNLSMGLHGTEGRECLQSGKNLSQWERRSCRRLCHECGLKVEERRIETVSSCNCKFHWCCTVKCETCTQTVTRYFCAKRHRNRRPHNHSRKRQHTRRG</sequence>
<name>WNT8A_DANRE</name>
<protein>
    <recommendedName>
        <fullName>Protein Wnt-8a</fullName>
    </recommendedName>
</protein>
<organism>
    <name type="scientific">Danio rerio</name>
    <name type="common">Zebrafish</name>
    <name type="synonym">Brachydanio rerio</name>
    <dbReference type="NCBI Taxonomy" id="7955"/>
    <lineage>
        <taxon>Eukaryota</taxon>
        <taxon>Metazoa</taxon>
        <taxon>Chordata</taxon>
        <taxon>Craniata</taxon>
        <taxon>Vertebrata</taxon>
        <taxon>Euteleostomi</taxon>
        <taxon>Actinopterygii</taxon>
        <taxon>Neopterygii</taxon>
        <taxon>Teleostei</taxon>
        <taxon>Ostariophysi</taxon>
        <taxon>Cypriniformes</taxon>
        <taxon>Danionidae</taxon>
        <taxon>Danioninae</taxon>
        <taxon>Danio</taxon>
    </lineage>
</organism>
<comment type="function">
    <text evidence="5 6 7 8">Ligand for members of the frizzled family of seven transmembrane receptors (Probable). Required for mesoderm and neural ectoderm patterning during gastrulation (PubMed:11703928). Involved in axis formation during embryonic development, via activation of canonical Wnt/CTNNB1 signaling (PubMed:11703928, PubMed:25371059). May be involved in the specification of the spatial patterns of expression of Gsc and other regulatory genes leading to the establishment of the embryonic axis (PubMed:7600994).</text>
</comment>
<comment type="subcellular location">
    <subcellularLocation>
        <location evidence="3">Secreted</location>
        <location evidence="3">Extracellular space</location>
        <location evidence="3">Extracellular matrix</location>
    </subcellularLocation>
    <subcellularLocation>
        <location evidence="3">Secreted</location>
    </subcellularLocation>
</comment>
<comment type="tissue specificity">
    <text evidence="7">Expressed in the margin of the pregastrula embryo destined to be the future mesoderm.</text>
</comment>
<comment type="developmental stage">
    <text evidence="5 6">Expressed in the segmental plate and ventral mesoderm during early gastrulation and early somitogenesis (PubMed:25371059). Expressed in the marginal region and in a broad domain in the ventral region after 75% epiboly (PubMed:11703928). Expressed in the tailbud during the bud stage (PubMed:11703928).</text>
</comment>
<comment type="PTM">
    <text evidence="1 2">Palmitoleoylation is required for efficient binding to frizzled receptors (By similarity). Depalmitoleoylation leads to Wnt signaling pathway inhibition (By similarity).</text>
</comment>
<comment type="PTM">
    <text evidence="1">Proteolytic processing by tiki1 and tiki2 promotes oxidation and formation of large disulfide-bond oligomers, leading to inactivation of wnt8.</text>
</comment>
<comment type="similarity">
    <text evidence="8">Belongs to the Wnt family.</text>
</comment>
<evidence type="ECO:0000250" key="1">
    <source>
        <dbReference type="UniProtKB" id="P28026"/>
    </source>
</evidence>
<evidence type="ECO:0000250" key="2">
    <source>
        <dbReference type="UniProtKB" id="P56704"/>
    </source>
</evidence>
<evidence type="ECO:0000250" key="3">
    <source>
        <dbReference type="UniProtKB" id="Q9H1J5"/>
    </source>
</evidence>
<evidence type="ECO:0000255" key="4"/>
<evidence type="ECO:0000269" key="5">
    <source>
    </source>
</evidence>
<evidence type="ECO:0000269" key="6">
    <source>
    </source>
</evidence>
<evidence type="ECO:0000269" key="7">
    <source>
    </source>
</evidence>
<evidence type="ECO:0000305" key="8"/>
<feature type="signal peptide" evidence="4">
    <location>
        <begin position="1"/>
        <end position="25"/>
    </location>
</feature>
<feature type="chain" id="PRO_0000041446" description="Protein Wnt-8a">
    <location>
        <begin position="26"/>
        <end position="359"/>
    </location>
</feature>
<feature type="lipid moiety-binding region" description="O-palmitoleoyl serine" evidence="1">
    <location>
        <position position="187"/>
    </location>
</feature>
<feature type="glycosylation site" description="N-linked (GlcNAc...) asparagine" evidence="4">
    <location>
        <position position="104"/>
    </location>
</feature>
<feature type="glycosylation site" description="N-linked (GlcNAc...) asparagine" evidence="4">
    <location>
        <position position="263"/>
    </location>
</feature>
<feature type="glycosylation site" description="N-linked (GlcNAc...) asparagine" evidence="4">
    <location>
        <position position="282"/>
    </location>
</feature>
<feature type="glycosylation site" description="N-linked (GlcNAc...) asparagine" evidence="4">
    <location>
        <position position="348"/>
    </location>
</feature>
<feature type="disulfide bond" evidence="1">
    <location>
        <begin position="55"/>
        <end position="66"/>
    </location>
</feature>
<feature type="disulfide bond" evidence="1">
    <location>
        <begin position="105"/>
        <end position="113"/>
    </location>
</feature>
<feature type="disulfide bond" evidence="1">
    <location>
        <begin position="115"/>
        <end position="133"/>
    </location>
</feature>
<feature type="disulfide bond" evidence="1">
    <location>
        <begin position="181"/>
        <end position="195"/>
    </location>
</feature>
<feature type="disulfide bond" evidence="1">
    <location>
        <begin position="183"/>
        <end position="190"/>
    </location>
</feature>
<feature type="disulfide bond" evidence="1">
    <location>
        <begin position="260"/>
        <end position="298"/>
    </location>
</feature>
<feature type="disulfide bond" evidence="1">
    <location>
        <begin position="276"/>
        <end position="291"/>
    </location>
</feature>
<feature type="disulfide bond" evidence="1">
    <location>
        <begin position="295"/>
        <end position="337"/>
    </location>
</feature>
<feature type="disulfide bond" evidence="1">
    <location>
        <begin position="313"/>
        <end position="328"/>
    </location>
</feature>
<feature type="disulfide bond" evidence="1">
    <location>
        <begin position="315"/>
        <end position="325"/>
    </location>
</feature>
<feature type="disulfide bond" evidence="1">
    <location>
        <begin position="320"/>
        <end position="321"/>
    </location>
</feature>
<feature type="sequence conflict" description="In Ref. 3; AAH55535." evidence="8" ref="3">
    <original>A</original>
    <variation>S</variation>
    <location>
        <position position="244"/>
    </location>
</feature>
<feature type="sequence conflict" description="In Ref. 3; AAH55535." evidence="8" ref="3">
    <original>Q</original>
    <variation>R</variation>
    <location>
        <position position="354"/>
    </location>
</feature>
<reference key="1">
    <citation type="journal article" date="1995" name="Development">
        <title>Zebrafish wnt8 and wnt8b share a common activity but are involved in distinct developmental pathways.</title>
        <authorList>
            <person name="Kelly G.M."/>
            <person name="Erezyilmaz D.F."/>
            <person name="Greenstein P.E."/>
            <person name="Moon R.T."/>
        </authorList>
    </citation>
    <scope>NUCLEOTIDE SEQUENCE [MRNA]</scope>
    <scope>FUNCTION</scope>
    <scope>TISSUE SPECIFICITY</scope>
    <source>
        <tissue>Embryo</tissue>
    </source>
</reference>
<reference key="2">
    <citation type="journal article" date="2001" name="Dev. Cell">
        <title>Zebrafish wnt8 encodes two wnt8 proteins on a bicistronic transcript and is required for mesoderm and neurectoderm patterning.</title>
        <authorList>
            <person name="Lekven A.C."/>
            <person name="Thorpe C.J."/>
            <person name="Waxman J.S."/>
            <person name="Moon R.T."/>
        </authorList>
    </citation>
    <scope>NUCLEOTIDE SEQUENCE [GENOMIC DNA]</scope>
    <scope>SEQUENCE REVISION</scope>
    <scope>DEVELOPMENTAL STAGE</scope>
    <scope>FUNCTION</scope>
</reference>
<reference key="3">
    <citation type="submission" date="2003-08" db="EMBL/GenBank/DDBJ databases">
        <authorList>
            <consortium name="NIH - Zebrafish Gene Collection (ZGC) project"/>
        </authorList>
    </citation>
    <scope>NUCLEOTIDE SEQUENCE [LARGE SCALE MRNA]</scope>
    <source>
        <strain>AB</strain>
    </source>
</reference>
<reference key="4">
    <citation type="journal article" date="2014" name="Nat. Commun.">
        <title>Tissue-specific derepression of TCF/LEF controls the activity of the Wnt/beta-catenin pathway.</title>
        <authorList>
            <person name="Lu F.I."/>
            <person name="Sun Y.H."/>
            <person name="Wei C.Y."/>
            <person name="Thisse C."/>
            <person name="Thisse B."/>
        </authorList>
    </citation>
    <scope>FUNCTION</scope>
    <scope>DEVELOPMENTAL STAGE</scope>
</reference>
<dbReference type="EMBL" id="U10869">
    <property type="protein sequence ID" value="AAC59697.2"/>
    <property type="molecule type" value="mRNA"/>
</dbReference>
<dbReference type="EMBL" id="AY032749">
    <property type="protein sequence ID" value="AAK70223.1"/>
    <property type="molecule type" value="Genomic_DNA"/>
</dbReference>
<dbReference type="EMBL" id="BC055535">
    <property type="protein sequence ID" value="AAH55535.1"/>
    <property type="molecule type" value="mRNA"/>
</dbReference>
<dbReference type="PIR" id="I50505">
    <property type="entry name" value="I50505"/>
</dbReference>
<dbReference type="RefSeq" id="NP_571021.3">
    <property type="nucleotide sequence ID" value="NM_130946.3"/>
</dbReference>
<dbReference type="SMR" id="P51028"/>
<dbReference type="BioGRID" id="78358">
    <property type="interactions" value="12"/>
</dbReference>
<dbReference type="FunCoup" id="P51028">
    <property type="interactions" value="723"/>
</dbReference>
<dbReference type="STRING" id="7955.ENSDARP00000116057"/>
<dbReference type="GlyCosmos" id="P51028">
    <property type="glycosylation" value="4 sites, No reported glycans"/>
</dbReference>
<dbReference type="PaxDb" id="7955-ENSDARP00000116057"/>
<dbReference type="GeneID" id="30122"/>
<dbReference type="KEGG" id="dre:30122"/>
<dbReference type="AGR" id="ZFIN:ZDB-GENE-980526-332"/>
<dbReference type="CTD" id="7478"/>
<dbReference type="ZFIN" id="ZDB-GENE-980526-332">
    <property type="gene designation" value="wnt8a"/>
</dbReference>
<dbReference type="eggNOG" id="KOG3913">
    <property type="taxonomic scope" value="Eukaryota"/>
</dbReference>
<dbReference type="InParanoid" id="P51028"/>
<dbReference type="OrthoDB" id="5945655at2759"/>
<dbReference type="PhylomeDB" id="P51028"/>
<dbReference type="Reactome" id="R-DRE-3238698">
    <property type="pathway name" value="WNT ligand biogenesis and trafficking"/>
</dbReference>
<dbReference type="Reactome" id="R-DRE-4641262">
    <property type="pathway name" value="Disassembly of the destruction complex and recruitment of AXIN to the membrane"/>
</dbReference>
<dbReference type="PRO" id="PR:P51028"/>
<dbReference type="Proteomes" id="UP000000437">
    <property type="component" value="Chromosome 14"/>
</dbReference>
<dbReference type="GO" id="GO:0097189">
    <property type="term" value="C:apoptotic body"/>
    <property type="evidence" value="ECO:0000314"/>
    <property type="project" value="ZFIN"/>
</dbReference>
<dbReference type="GO" id="GO:0009986">
    <property type="term" value="C:cell surface"/>
    <property type="evidence" value="ECO:0000314"/>
    <property type="project" value="ZFIN"/>
</dbReference>
<dbReference type="GO" id="GO:0005615">
    <property type="term" value="C:extracellular space"/>
    <property type="evidence" value="ECO:0000318"/>
    <property type="project" value="GO_Central"/>
</dbReference>
<dbReference type="GO" id="GO:0005125">
    <property type="term" value="F:cytokine activity"/>
    <property type="evidence" value="ECO:0000318"/>
    <property type="project" value="GO_Central"/>
</dbReference>
<dbReference type="GO" id="GO:0005109">
    <property type="term" value="F:frizzled binding"/>
    <property type="evidence" value="ECO:0000318"/>
    <property type="project" value="GO_Central"/>
</dbReference>
<dbReference type="GO" id="GO:0009952">
    <property type="term" value="P:anterior/posterior pattern specification"/>
    <property type="evidence" value="ECO:0000314"/>
    <property type="project" value="ZFIN"/>
</dbReference>
<dbReference type="GO" id="GO:0035284">
    <property type="term" value="P:brain segmentation"/>
    <property type="evidence" value="ECO:0000315"/>
    <property type="project" value="ZFIN"/>
</dbReference>
<dbReference type="GO" id="GO:0060070">
    <property type="term" value="P:canonical Wnt signaling pathway"/>
    <property type="evidence" value="ECO:0000315"/>
    <property type="project" value="BHF-UCL"/>
</dbReference>
<dbReference type="GO" id="GO:0045165">
    <property type="term" value="P:cell fate commitment"/>
    <property type="evidence" value="ECO:0000314"/>
    <property type="project" value="ZFIN"/>
</dbReference>
<dbReference type="GO" id="GO:0042074">
    <property type="term" value="P:cell migration involved in gastrulation"/>
    <property type="evidence" value="ECO:0000316"/>
    <property type="project" value="ZFIN"/>
</dbReference>
<dbReference type="GO" id="GO:0039015">
    <property type="term" value="P:cell proliferation involved in pronephros development"/>
    <property type="evidence" value="ECO:0000315"/>
    <property type="project" value="ZFIN"/>
</dbReference>
<dbReference type="GO" id="GO:0007417">
    <property type="term" value="P:central nervous system development"/>
    <property type="evidence" value="ECO:0000315"/>
    <property type="project" value="ZFIN"/>
</dbReference>
<dbReference type="GO" id="GO:0048263">
    <property type="term" value="P:determination of dorsal identity"/>
    <property type="evidence" value="ECO:0000315"/>
    <property type="project" value="ZFIN"/>
</dbReference>
<dbReference type="GO" id="GO:0009950">
    <property type="term" value="P:dorsal/ventral axis specification"/>
    <property type="evidence" value="ECO:0000315"/>
    <property type="project" value="BHF-UCL"/>
</dbReference>
<dbReference type="GO" id="GO:0009953">
    <property type="term" value="P:dorsal/ventral pattern formation"/>
    <property type="evidence" value="ECO:0000315"/>
    <property type="project" value="ZFIN"/>
</dbReference>
<dbReference type="GO" id="GO:0007398">
    <property type="term" value="P:ectoderm development"/>
    <property type="evidence" value="ECO:0000315"/>
    <property type="project" value="ZFIN"/>
</dbReference>
<dbReference type="GO" id="GO:0000578">
    <property type="term" value="P:embryonic axis specification"/>
    <property type="evidence" value="ECO:0000315"/>
    <property type="project" value="UniProtKB"/>
</dbReference>
<dbReference type="GO" id="GO:0007492">
    <property type="term" value="P:endoderm development"/>
    <property type="evidence" value="ECO:0000315"/>
    <property type="project" value="ZFIN"/>
</dbReference>
<dbReference type="GO" id="GO:0001654">
    <property type="term" value="P:eye development"/>
    <property type="evidence" value="ECO:0000314"/>
    <property type="project" value="ZFIN"/>
</dbReference>
<dbReference type="GO" id="GO:0030902">
    <property type="term" value="P:hindbrain development"/>
    <property type="evidence" value="ECO:0000315"/>
    <property type="project" value="ZFIN"/>
</dbReference>
<dbReference type="GO" id="GO:0007498">
    <property type="term" value="P:mesoderm development"/>
    <property type="evidence" value="ECO:0000315"/>
    <property type="project" value="ZFIN"/>
</dbReference>
<dbReference type="GO" id="GO:0001707">
    <property type="term" value="P:mesoderm formation"/>
    <property type="evidence" value="ECO:0000315"/>
    <property type="project" value="ZFIN"/>
</dbReference>
<dbReference type="GO" id="GO:0001710">
    <property type="term" value="P:mesodermal cell fate commitment"/>
    <property type="evidence" value="ECO:0000316"/>
    <property type="project" value="ZFIN"/>
</dbReference>
<dbReference type="GO" id="GO:0090090">
    <property type="term" value="P:negative regulation of canonical Wnt signaling pathway"/>
    <property type="evidence" value="ECO:0000316"/>
    <property type="project" value="ZFIN"/>
</dbReference>
<dbReference type="GO" id="GO:0014036">
    <property type="term" value="P:neural crest cell fate specification"/>
    <property type="evidence" value="ECO:0000315"/>
    <property type="project" value="ZFIN"/>
</dbReference>
<dbReference type="GO" id="GO:0021999">
    <property type="term" value="P:neural plate anterior/posterior regionalization"/>
    <property type="evidence" value="ECO:0000316"/>
    <property type="project" value="ZFIN"/>
</dbReference>
<dbReference type="GO" id="GO:0060896">
    <property type="term" value="P:neural plate pattern specification"/>
    <property type="evidence" value="ECO:0000314"/>
    <property type="project" value="ZFIN"/>
</dbReference>
<dbReference type="GO" id="GO:0030182">
    <property type="term" value="P:neuron differentiation"/>
    <property type="evidence" value="ECO:0000318"/>
    <property type="project" value="GO_Central"/>
</dbReference>
<dbReference type="GO" id="GO:0030903">
    <property type="term" value="P:notochord development"/>
    <property type="evidence" value="ECO:0000315"/>
    <property type="project" value="ZFIN"/>
</dbReference>
<dbReference type="GO" id="GO:0090263">
    <property type="term" value="P:positive regulation of canonical Wnt signaling pathway"/>
    <property type="evidence" value="ECO:0000315"/>
    <property type="project" value="UniProtKB"/>
</dbReference>
<dbReference type="GO" id="GO:0045743">
    <property type="term" value="P:positive regulation of fibroblast growth factor receptor signaling pathway"/>
    <property type="evidence" value="ECO:0000315"/>
    <property type="project" value="ZFIN"/>
</dbReference>
<dbReference type="GO" id="GO:0010628">
    <property type="term" value="P:positive regulation of gene expression"/>
    <property type="evidence" value="ECO:0000315"/>
    <property type="project" value="ZFIN"/>
</dbReference>
<dbReference type="GO" id="GO:0036342">
    <property type="term" value="P:post-anal tail morphogenesis"/>
    <property type="evidence" value="ECO:0000315"/>
    <property type="project" value="ZFIN"/>
</dbReference>
<dbReference type="GO" id="GO:2000742">
    <property type="term" value="P:regulation of anterior head development"/>
    <property type="evidence" value="ECO:0000316"/>
    <property type="project" value="ZFIN"/>
</dbReference>
<dbReference type="GO" id="GO:0042127">
    <property type="term" value="P:regulation of cell population proliferation"/>
    <property type="evidence" value="ECO:0000315"/>
    <property type="project" value="ZFIN"/>
</dbReference>
<dbReference type="GO" id="GO:0001756">
    <property type="term" value="P:somitogenesis"/>
    <property type="evidence" value="ECO:0000316"/>
    <property type="project" value="ZFIN"/>
</dbReference>
<dbReference type="GO" id="GO:0060061">
    <property type="term" value="P:Spemann organizer formation"/>
    <property type="evidence" value="ECO:0000315"/>
    <property type="project" value="ZFIN"/>
</dbReference>
<dbReference type="GO" id="GO:0021512">
    <property type="term" value="P:spinal cord anterior/posterior patterning"/>
    <property type="evidence" value="ECO:0000315"/>
    <property type="project" value="ZFIN"/>
</dbReference>
<dbReference type="GO" id="GO:0016055">
    <property type="term" value="P:Wnt signaling pathway"/>
    <property type="evidence" value="ECO:0000315"/>
    <property type="project" value="ZFIN"/>
</dbReference>
<dbReference type="CDD" id="cd19351">
    <property type="entry name" value="Wnt_Wnt8a"/>
    <property type="match status" value="1"/>
</dbReference>
<dbReference type="FunFam" id="3.30.2460.20:FF:000003">
    <property type="entry name" value="Protein Wnt"/>
    <property type="match status" value="1"/>
</dbReference>
<dbReference type="Gene3D" id="3.30.2460.20">
    <property type="match status" value="1"/>
</dbReference>
<dbReference type="InterPro" id="IPR034312">
    <property type="entry name" value="Protein_Wnt-8A/8C"/>
</dbReference>
<dbReference type="InterPro" id="IPR005817">
    <property type="entry name" value="Wnt"/>
</dbReference>
<dbReference type="InterPro" id="IPR013301">
    <property type="entry name" value="Wnt8"/>
</dbReference>
<dbReference type="InterPro" id="IPR043158">
    <property type="entry name" value="Wnt_C"/>
</dbReference>
<dbReference type="InterPro" id="IPR018161">
    <property type="entry name" value="Wnt_CS"/>
</dbReference>
<dbReference type="InterPro" id="IPR013087">
    <property type="entry name" value="Znf_C2H2_type"/>
</dbReference>
<dbReference type="PANTHER" id="PTHR12027:SF92">
    <property type="entry name" value="PROTEIN WNT-8A"/>
    <property type="match status" value="1"/>
</dbReference>
<dbReference type="PANTHER" id="PTHR12027">
    <property type="entry name" value="WNT RELATED"/>
    <property type="match status" value="1"/>
</dbReference>
<dbReference type="Pfam" id="PF00110">
    <property type="entry name" value="wnt"/>
    <property type="match status" value="1"/>
</dbReference>
<dbReference type="PRINTS" id="PR01892">
    <property type="entry name" value="WNT8PROTEIN"/>
</dbReference>
<dbReference type="PRINTS" id="PR01349">
    <property type="entry name" value="WNTPROTEIN"/>
</dbReference>
<dbReference type="SMART" id="SM00097">
    <property type="entry name" value="WNT1"/>
    <property type="match status" value="1"/>
</dbReference>
<dbReference type="PROSITE" id="PS00246">
    <property type="entry name" value="WNT1"/>
    <property type="match status" value="1"/>
</dbReference>
<gene>
    <name type="primary">wnt8a</name>
    <name type="synonym">wnt-8</name>
    <name type="synonym">wnt8</name>
</gene>
<accession>P51028</accession>
<accession>Q7SXM4</accession>
<accession>Q90YL9</accession>